<keyword id="KW-1185">Reference proteome</keyword>
<name>Y635_MYCTO</name>
<organism>
    <name type="scientific">Mycobacterium tuberculosis (strain CDC 1551 / Oshkosh)</name>
    <dbReference type="NCBI Taxonomy" id="83331"/>
    <lineage>
        <taxon>Bacteria</taxon>
        <taxon>Bacillati</taxon>
        <taxon>Actinomycetota</taxon>
        <taxon>Actinomycetes</taxon>
        <taxon>Mycobacteriales</taxon>
        <taxon>Mycobacteriaceae</taxon>
        <taxon>Mycobacterium</taxon>
        <taxon>Mycobacterium tuberculosis complex</taxon>
    </lineage>
</organism>
<feature type="chain" id="PRO_0000428525" description="UPF0336 protein MT0664">
    <location>
        <begin position="1"/>
        <end position="158"/>
    </location>
</feature>
<comment type="similarity">
    <text evidence="1">Belongs to the UPF0336 family.</text>
</comment>
<gene>
    <name type="ordered locus">MT0664</name>
</gene>
<reference key="1">
    <citation type="journal article" date="2002" name="J. Bacteriol.">
        <title>Whole-genome comparison of Mycobacterium tuberculosis clinical and laboratory strains.</title>
        <authorList>
            <person name="Fleischmann R.D."/>
            <person name="Alland D."/>
            <person name="Eisen J.A."/>
            <person name="Carpenter L."/>
            <person name="White O."/>
            <person name="Peterson J.D."/>
            <person name="DeBoy R.T."/>
            <person name="Dodson R.J."/>
            <person name="Gwinn M.L."/>
            <person name="Haft D.H."/>
            <person name="Hickey E.K."/>
            <person name="Kolonay J.F."/>
            <person name="Nelson W.C."/>
            <person name="Umayam L.A."/>
            <person name="Ermolaeva M.D."/>
            <person name="Salzberg S.L."/>
            <person name="Delcher A."/>
            <person name="Utterback T.R."/>
            <person name="Weidman J.F."/>
            <person name="Khouri H.M."/>
            <person name="Gill J."/>
            <person name="Mikula A."/>
            <person name="Bishai W."/>
            <person name="Jacobs W.R. Jr."/>
            <person name="Venter J.C."/>
            <person name="Fraser C.M."/>
        </authorList>
    </citation>
    <scope>NUCLEOTIDE SEQUENCE [LARGE SCALE GENOMIC DNA]</scope>
    <source>
        <strain>CDC 1551 / Oshkosh</strain>
    </source>
</reference>
<sequence>MALSADIVGMHYRYPDHYEVEREKIREYAVAVQNDDAWYFEEDGAAELGYKGLLAPLTFICVFGYKAQAAFFKHANIATAEAQIVQVDQVLKFEKPIVAGDKLYCDVYVDSVREAHGTQIIVTKNIVTNEEGDLVQETYTTLAGRAGEDGEGFSDGAA</sequence>
<dbReference type="EMBL" id="AE000516">
    <property type="protein sequence ID" value="AAK44889.1"/>
    <property type="molecule type" value="Genomic_DNA"/>
</dbReference>
<dbReference type="PIR" id="H70612">
    <property type="entry name" value="H70612"/>
</dbReference>
<dbReference type="SMR" id="P9WFK0"/>
<dbReference type="KEGG" id="mtc:MT0664"/>
<dbReference type="PATRIC" id="fig|83331.31.peg.706"/>
<dbReference type="HOGENOM" id="CLU_116276_0_1_11"/>
<dbReference type="Proteomes" id="UP000001020">
    <property type="component" value="Chromosome"/>
</dbReference>
<dbReference type="GO" id="GO:0019171">
    <property type="term" value="F:(3R)-hydroxyacyl-[acyl-carrier-protein] dehydratase activity"/>
    <property type="evidence" value="ECO:0007669"/>
    <property type="project" value="TreeGrafter"/>
</dbReference>
<dbReference type="GO" id="GO:0006633">
    <property type="term" value="P:fatty acid biosynthetic process"/>
    <property type="evidence" value="ECO:0007669"/>
    <property type="project" value="TreeGrafter"/>
</dbReference>
<dbReference type="CDD" id="cd03441">
    <property type="entry name" value="R_hydratase_like"/>
    <property type="match status" value="1"/>
</dbReference>
<dbReference type="Gene3D" id="3.10.129.10">
    <property type="entry name" value="Hotdog Thioesterase"/>
    <property type="match status" value="1"/>
</dbReference>
<dbReference type="HAMAP" id="MF_00799">
    <property type="entry name" value="UPF0336"/>
    <property type="match status" value="1"/>
</dbReference>
<dbReference type="InterPro" id="IPR039569">
    <property type="entry name" value="FAS1-like_DH_region"/>
</dbReference>
<dbReference type="InterPro" id="IPR016709">
    <property type="entry name" value="HadA-like"/>
</dbReference>
<dbReference type="InterPro" id="IPR029069">
    <property type="entry name" value="HotDog_dom_sf"/>
</dbReference>
<dbReference type="InterPro" id="IPR050965">
    <property type="entry name" value="UPF0336/Enoyl-CoA_hydratase"/>
</dbReference>
<dbReference type="InterPro" id="IPR054849">
    <property type="entry name" value="UPF0336_fam"/>
</dbReference>
<dbReference type="NCBIfam" id="NF040624">
    <property type="entry name" value="HadA"/>
    <property type="match status" value="1"/>
</dbReference>
<dbReference type="NCBIfam" id="NF010245">
    <property type="entry name" value="PRK13692.1"/>
    <property type="match status" value="1"/>
</dbReference>
<dbReference type="PANTHER" id="PTHR43437:SF3">
    <property type="entry name" value="HYDROXYACYL-THIOESTER DEHYDRATASE TYPE 2, MITOCHONDRIAL"/>
    <property type="match status" value="1"/>
</dbReference>
<dbReference type="PANTHER" id="PTHR43437">
    <property type="entry name" value="HYDROXYACYL-THIOESTER DEHYDRATASE TYPE 2, MITOCHONDRIAL-RELATED"/>
    <property type="match status" value="1"/>
</dbReference>
<dbReference type="Pfam" id="PF13452">
    <property type="entry name" value="FAS1_DH_region"/>
    <property type="match status" value="1"/>
</dbReference>
<dbReference type="PIRSF" id="PIRSF018072">
    <property type="entry name" value="UCP018072"/>
    <property type="match status" value="1"/>
</dbReference>
<dbReference type="SUPFAM" id="SSF54637">
    <property type="entry name" value="Thioesterase/thiol ester dehydrase-isomerase"/>
    <property type="match status" value="1"/>
</dbReference>
<accession>P9WFK0</accession>
<accession>L0T749</accession>
<accession>P96926</accession>
<accession>Q7D9I0</accession>
<proteinExistence type="inferred from homology"/>
<protein>
    <recommendedName>
        <fullName evidence="1">UPF0336 protein MT0664</fullName>
    </recommendedName>
</protein>
<evidence type="ECO:0000255" key="1">
    <source>
        <dbReference type="HAMAP-Rule" id="MF_00799"/>
    </source>
</evidence>